<sequence>MAKIIRIKGEILGKDEPMVFTKEYNVVKEDDALETMYSEMGSKHSVKRAYINVLEVSEISEEDVQSPILKKTLEMY</sequence>
<dbReference type="EMBL" id="CP000867">
    <property type="protein sequence ID" value="ABX01705.1"/>
    <property type="molecule type" value="Genomic_DNA"/>
</dbReference>
<dbReference type="SMR" id="A9A8N2"/>
<dbReference type="STRING" id="444158.MmarC6_0890"/>
<dbReference type="KEGG" id="mmx:MmarC6_0890"/>
<dbReference type="eggNOG" id="arCOG04175">
    <property type="taxonomic scope" value="Archaea"/>
</dbReference>
<dbReference type="HOGENOM" id="CLU_177460_0_1_2"/>
<dbReference type="OrthoDB" id="191241at2157"/>
<dbReference type="PhylomeDB" id="A9A8N2"/>
<dbReference type="GO" id="GO:1990904">
    <property type="term" value="C:ribonucleoprotein complex"/>
    <property type="evidence" value="ECO:0007669"/>
    <property type="project" value="UniProtKB-KW"/>
</dbReference>
<dbReference type="GO" id="GO:0005840">
    <property type="term" value="C:ribosome"/>
    <property type="evidence" value="ECO:0007669"/>
    <property type="project" value="UniProtKB-KW"/>
</dbReference>
<dbReference type="GO" id="GO:0070180">
    <property type="term" value="F:large ribosomal subunit rRNA binding"/>
    <property type="evidence" value="ECO:0007669"/>
    <property type="project" value="UniProtKB-UniRule"/>
</dbReference>
<dbReference type="GO" id="GO:0003735">
    <property type="term" value="F:structural constituent of ribosome"/>
    <property type="evidence" value="ECO:0007669"/>
    <property type="project" value="InterPro"/>
</dbReference>
<dbReference type="GO" id="GO:0006412">
    <property type="term" value="P:translation"/>
    <property type="evidence" value="ECO:0007669"/>
    <property type="project" value="UniProtKB-UniRule"/>
</dbReference>
<dbReference type="Gene3D" id="3.10.20.10">
    <property type="match status" value="1"/>
</dbReference>
<dbReference type="HAMAP" id="MF_00273">
    <property type="entry name" value="Ribosomal_eL20"/>
    <property type="match status" value="1"/>
</dbReference>
<dbReference type="InterPro" id="IPR028877">
    <property type="entry name" value="Ribosomal_eL20"/>
</dbReference>
<dbReference type="InterPro" id="IPR023573">
    <property type="entry name" value="Ribosomal_eL20_dom"/>
</dbReference>
<dbReference type="NCBIfam" id="NF001981">
    <property type="entry name" value="PRK00773.1-1"/>
    <property type="match status" value="1"/>
</dbReference>
<dbReference type="Pfam" id="PF01775">
    <property type="entry name" value="Ribosomal_L18A"/>
    <property type="match status" value="1"/>
</dbReference>
<dbReference type="SUPFAM" id="SSF160374">
    <property type="entry name" value="RplX-like"/>
    <property type="match status" value="1"/>
</dbReference>
<evidence type="ECO:0000255" key="1">
    <source>
        <dbReference type="HAMAP-Rule" id="MF_00273"/>
    </source>
</evidence>
<evidence type="ECO:0000305" key="2"/>
<protein>
    <recommendedName>
        <fullName evidence="1">Large ribosomal subunit protein eL20</fullName>
    </recommendedName>
    <alternativeName>
        <fullName evidence="2">50S ribosomal protein L18Ae</fullName>
    </alternativeName>
    <alternativeName>
        <fullName evidence="1">50S ribosomal protein L20e</fullName>
    </alternativeName>
    <alternativeName>
        <fullName evidence="1">50S ribosomal protein LX</fullName>
    </alternativeName>
</protein>
<organism>
    <name type="scientific">Methanococcus maripaludis (strain C6 / ATCC BAA-1332)</name>
    <dbReference type="NCBI Taxonomy" id="444158"/>
    <lineage>
        <taxon>Archaea</taxon>
        <taxon>Methanobacteriati</taxon>
        <taxon>Methanobacteriota</taxon>
        <taxon>Methanomada group</taxon>
        <taxon>Methanococci</taxon>
        <taxon>Methanococcales</taxon>
        <taxon>Methanococcaceae</taxon>
        <taxon>Methanococcus</taxon>
    </lineage>
</organism>
<proteinExistence type="inferred from homology"/>
<reference key="1">
    <citation type="submission" date="2007-10" db="EMBL/GenBank/DDBJ databases">
        <title>Complete sequence of Methanococcus maripaludis C6.</title>
        <authorList>
            <consortium name="US DOE Joint Genome Institute"/>
            <person name="Copeland A."/>
            <person name="Lucas S."/>
            <person name="Lapidus A."/>
            <person name="Barry K."/>
            <person name="Glavina del Rio T."/>
            <person name="Dalin E."/>
            <person name="Tice H."/>
            <person name="Pitluck S."/>
            <person name="Clum A."/>
            <person name="Schmutz J."/>
            <person name="Larimer F."/>
            <person name="Land M."/>
            <person name="Hauser L."/>
            <person name="Kyrpides N."/>
            <person name="Mikhailova N."/>
            <person name="Sieprawska-Lupa M."/>
            <person name="Whitman W.B."/>
            <person name="Richardson P."/>
        </authorList>
    </citation>
    <scope>NUCLEOTIDE SEQUENCE [LARGE SCALE GENOMIC DNA]</scope>
    <source>
        <strain>C6 / ATCC BAA-1332</strain>
    </source>
</reference>
<accession>A9A8N2</accession>
<gene>
    <name evidence="1" type="primary">rpl18a</name>
    <name evidence="1" type="synonym">rpl20e</name>
    <name evidence="1" type="synonym">rplX</name>
    <name type="ordered locus">MmarC6_0890</name>
</gene>
<comment type="subunit">
    <text evidence="1">Part of the 50S ribosomal subunit. Binds 23S rRNA.</text>
</comment>
<comment type="similarity">
    <text evidence="1">Belongs to the eukaryotic ribosomal protein eL20 family.</text>
</comment>
<feature type="chain" id="PRO_1000114568" description="Large ribosomal subunit protein eL20">
    <location>
        <begin position="1"/>
        <end position="76"/>
    </location>
</feature>
<keyword id="KW-0687">Ribonucleoprotein</keyword>
<keyword id="KW-0689">Ribosomal protein</keyword>
<keyword id="KW-0694">RNA-binding</keyword>
<keyword id="KW-0699">rRNA-binding</keyword>
<name>RL18A_METM6</name>